<keyword id="KW-0325">Glycoprotein</keyword>
<keyword id="KW-1185">Reference proteome</keyword>
<keyword id="KW-0708">Seed storage protein</keyword>
<keyword id="KW-0732">Signal</keyword>
<keyword id="KW-0758">Storage protein</keyword>
<accession>P10742</accession>
<sequence>KVLVFFVATILVAWQCHAYDMFPLRMNTGYGARTPEVKCASWRLAVEAHNIFGFETIPEECVEATKEYIHGEQYRSDSKTVNQQAYFYARDLEVHPKDTFVFSIDGTVLSNIPYYKKHGYGVEKFNSTLYDEWVNKGNAPALPETLKNYNKLVSLGFKIIFLSGRTLDKQAVTEANLKKAGYHTWEKLILKDPQDPSTPNAVSYKTAAREKLIRQGYNIVGIIGDQWSDLLGGHRGESRTFKLPNPCTTFSSSFTSQQSSLLPIYLYVIRCVQIGALASLYVVSAVCQQVM</sequence>
<protein>
    <recommendedName>
        <fullName>Stem 31 kDa glycoprotein</fullName>
    </recommendedName>
    <alternativeName>
        <fullName>Vegetative storage protein VSP25</fullName>
    </alternativeName>
</protein>
<comment type="function">
    <text>May function as somatic storage protein during early seedling development.</text>
</comment>
<comment type="tissue specificity">
    <text>Accumulates in the stems of developing soybean seedlings.</text>
</comment>
<reference key="1">
    <citation type="journal article" date="1988" name="Plant Physiol.">
        <title>Soybean vegetative storage protein structure and gene expression.</title>
        <authorList>
            <person name="Staswick P.E."/>
        </authorList>
    </citation>
    <scope>NUCLEOTIDE SEQUENCE [MRNA]</scope>
    <source>
        <tissue>Leaf</tissue>
    </source>
</reference>
<reference key="2">
    <citation type="journal article" date="1989" name="Plant Physiol.">
        <authorList>
            <person name="Staswick P.E."/>
        </authorList>
    </citation>
    <scope>ERRATUM OF PUBMED:16666113</scope>
    <scope>SEQUENCE REVISION</scope>
</reference>
<proteinExistence type="evidence at transcript level"/>
<dbReference type="EMBL" id="M20037">
    <property type="protein sequence ID" value="AAA34020.1"/>
    <property type="molecule type" value="mRNA"/>
</dbReference>
<dbReference type="PIR" id="JA0140">
    <property type="entry name" value="UESY25"/>
</dbReference>
<dbReference type="PIR" id="T08848">
    <property type="entry name" value="T08848"/>
</dbReference>
<dbReference type="SMR" id="P10742"/>
<dbReference type="STRING" id="3847.P10742"/>
<dbReference type="GlyCosmos" id="P10742">
    <property type="glycosylation" value="1 site, No reported glycans"/>
</dbReference>
<dbReference type="InParanoid" id="P10742"/>
<dbReference type="BRENDA" id="3.1.3.2">
    <property type="organism ID" value="2483"/>
</dbReference>
<dbReference type="Proteomes" id="UP000008827">
    <property type="component" value="Unplaced"/>
</dbReference>
<dbReference type="GO" id="GO:0045735">
    <property type="term" value="F:nutrient reservoir activity"/>
    <property type="evidence" value="ECO:0007669"/>
    <property type="project" value="UniProtKB-KW"/>
</dbReference>
<dbReference type="CDD" id="cd07535">
    <property type="entry name" value="HAD_VSP"/>
    <property type="match status" value="1"/>
</dbReference>
<dbReference type="Gene3D" id="3.40.50.1000">
    <property type="entry name" value="HAD superfamily/HAD-like"/>
    <property type="match status" value="1"/>
</dbReference>
<dbReference type="InterPro" id="IPR005519">
    <property type="entry name" value="Acid_phosphat_B-like"/>
</dbReference>
<dbReference type="InterPro" id="IPR014403">
    <property type="entry name" value="APS1/VSP"/>
</dbReference>
<dbReference type="InterPro" id="IPR036412">
    <property type="entry name" value="HAD-like_sf"/>
</dbReference>
<dbReference type="InterPro" id="IPR023214">
    <property type="entry name" value="HAD_sf"/>
</dbReference>
<dbReference type="InterPro" id="IPR011267">
    <property type="entry name" value="Veg_Stor_Prot"/>
</dbReference>
<dbReference type="NCBIfam" id="TIGR01680">
    <property type="entry name" value="Veg_Stor_Prot"/>
    <property type="match status" value="1"/>
</dbReference>
<dbReference type="PANTHER" id="PTHR31284">
    <property type="entry name" value="ACID PHOSPHATASE-LIKE PROTEIN"/>
    <property type="match status" value="1"/>
</dbReference>
<dbReference type="PANTHER" id="PTHR31284:SF19">
    <property type="entry name" value="VEGETATIVE STORAGE PROTEIN 1-RELATED"/>
    <property type="match status" value="1"/>
</dbReference>
<dbReference type="Pfam" id="PF03767">
    <property type="entry name" value="Acid_phosphat_B"/>
    <property type="match status" value="1"/>
</dbReference>
<dbReference type="PIRSF" id="PIRSF002674">
    <property type="entry name" value="VSP"/>
    <property type="match status" value="1"/>
</dbReference>
<dbReference type="SUPFAM" id="SSF56784">
    <property type="entry name" value="HAD-like"/>
    <property type="match status" value="1"/>
</dbReference>
<feature type="signal peptide">
    <location>
        <begin position="1" status="less than"/>
        <end status="unknown"/>
    </location>
</feature>
<feature type="propeptide" id="PRO_0000022261">
    <location>
        <begin status="unknown"/>
        <end position="31"/>
    </location>
</feature>
<feature type="chain" id="PRO_0000022262" description="Stem 31 kDa glycoprotein">
    <location>
        <begin position="32"/>
        <end position="291"/>
    </location>
</feature>
<feature type="glycosylation site" description="N-linked (GlcNAc...) asparagine" evidence="1">
    <location>
        <position position="126"/>
    </location>
</feature>
<feature type="non-terminal residue">
    <location>
        <position position="1"/>
    </location>
</feature>
<organism>
    <name type="scientific">Glycine max</name>
    <name type="common">Soybean</name>
    <name type="synonym">Glycine hispida</name>
    <dbReference type="NCBI Taxonomy" id="3847"/>
    <lineage>
        <taxon>Eukaryota</taxon>
        <taxon>Viridiplantae</taxon>
        <taxon>Streptophyta</taxon>
        <taxon>Embryophyta</taxon>
        <taxon>Tracheophyta</taxon>
        <taxon>Spermatophyta</taxon>
        <taxon>Magnoliopsida</taxon>
        <taxon>eudicotyledons</taxon>
        <taxon>Gunneridae</taxon>
        <taxon>Pentapetalae</taxon>
        <taxon>rosids</taxon>
        <taxon>fabids</taxon>
        <taxon>Fabales</taxon>
        <taxon>Fabaceae</taxon>
        <taxon>Papilionoideae</taxon>
        <taxon>50 kb inversion clade</taxon>
        <taxon>NPAAA clade</taxon>
        <taxon>indigoferoid/millettioid clade</taxon>
        <taxon>Phaseoleae</taxon>
        <taxon>Glycine</taxon>
        <taxon>Glycine subgen. Soja</taxon>
    </lineage>
</organism>
<gene>
    <name type="primary">VSP25</name>
</gene>
<name>S25K_SOYBN</name>
<evidence type="ECO:0000255" key="1"/>